<sequence>MAAKDVKFGNDARVKMLRGVNVLADAVKVTLGPKGRNVVLDKSFGAPTITKDGVSVAREIELEDKFENMGAQMVKEVASKANDAAGDGTTTATVLAQAIVNEGLKAVAAGMNPMDLKRGIDKAVIAAVEELKALSVPCSDSKAIAQVGTISANSDETVGKLIAEAMDKVGKEGVITVEDGTGLEDELDVVEGMQFDRGYLSPYFINKPDTGAVELESPFILLADKKISNIREMLPVLEAVAKAGKPLVIIAEDVEGEALATLVVNTMRGIVKVAAVKAPGFGDRRKAMLQDIATLTGGTVISEEIGMELEKATLEDLGQAKRVVINKDTTTIIDGVGEESAIQGRVAQIRKQIEEATSDYDREKLQERVAKLAGGVAVIKVGAATEVEMKEKKARVDDALHATRAAVEEGVVAGGGVALVRVAAKLAGLTGQNEDQNVGIKVALRAMEAPLRQIVSNAGEEPSVVANNVKAGDGNYGYNAATEEYGNMIDFGILDPTKVTRSALQYAASVAGLMITTECMVTDLPKGDAPDLGAAGGMGGMGGMGGMM</sequence>
<gene>
    <name evidence="1" type="primary">groEL</name>
    <name evidence="1" type="synonym">groL</name>
    <name type="ordered locus">KPK_5137</name>
</gene>
<organism>
    <name type="scientific">Klebsiella pneumoniae (strain 342)</name>
    <dbReference type="NCBI Taxonomy" id="507522"/>
    <lineage>
        <taxon>Bacteria</taxon>
        <taxon>Pseudomonadati</taxon>
        <taxon>Pseudomonadota</taxon>
        <taxon>Gammaproteobacteria</taxon>
        <taxon>Enterobacterales</taxon>
        <taxon>Enterobacteriaceae</taxon>
        <taxon>Klebsiella/Raoultella group</taxon>
        <taxon>Klebsiella</taxon>
        <taxon>Klebsiella pneumoniae complex</taxon>
    </lineage>
</organism>
<keyword id="KW-0067">ATP-binding</keyword>
<keyword id="KW-0143">Chaperone</keyword>
<keyword id="KW-0963">Cytoplasm</keyword>
<keyword id="KW-0413">Isomerase</keyword>
<keyword id="KW-0547">Nucleotide-binding</keyword>
<comment type="function">
    <text evidence="1">Together with its co-chaperonin GroES, plays an essential role in assisting protein folding. The GroEL-GroES system forms a nano-cage that allows encapsulation of the non-native substrate proteins and provides a physical environment optimized to promote and accelerate protein folding.</text>
</comment>
<comment type="catalytic activity">
    <reaction evidence="1">
        <text>ATP + H2O + a folded polypeptide = ADP + phosphate + an unfolded polypeptide.</text>
        <dbReference type="EC" id="5.6.1.7"/>
    </reaction>
</comment>
<comment type="subunit">
    <text evidence="1">Forms a cylinder of 14 subunits composed of two heptameric rings stacked back-to-back. Interacts with the co-chaperonin GroES.</text>
</comment>
<comment type="subcellular location">
    <subcellularLocation>
        <location evidence="1">Cytoplasm</location>
    </subcellularLocation>
</comment>
<comment type="similarity">
    <text evidence="1">Belongs to the chaperonin (HSP60) family.</text>
</comment>
<evidence type="ECO:0000255" key="1">
    <source>
        <dbReference type="HAMAP-Rule" id="MF_00600"/>
    </source>
</evidence>
<accession>B5Y368</accession>
<proteinExistence type="inferred from homology"/>
<feature type="chain" id="PRO_1000130028" description="Chaperonin GroEL">
    <location>
        <begin position="1"/>
        <end position="548"/>
    </location>
</feature>
<feature type="binding site" evidence="1">
    <location>
        <begin position="30"/>
        <end position="33"/>
    </location>
    <ligand>
        <name>ATP</name>
        <dbReference type="ChEBI" id="CHEBI:30616"/>
    </ligand>
</feature>
<feature type="binding site" evidence="1">
    <location>
        <position position="51"/>
    </location>
    <ligand>
        <name>ATP</name>
        <dbReference type="ChEBI" id="CHEBI:30616"/>
    </ligand>
</feature>
<feature type="binding site" evidence="1">
    <location>
        <begin position="87"/>
        <end position="91"/>
    </location>
    <ligand>
        <name>ATP</name>
        <dbReference type="ChEBI" id="CHEBI:30616"/>
    </ligand>
</feature>
<feature type="binding site" evidence="1">
    <location>
        <position position="415"/>
    </location>
    <ligand>
        <name>ATP</name>
        <dbReference type="ChEBI" id="CHEBI:30616"/>
    </ligand>
</feature>
<feature type="binding site" evidence="1">
    <location>
        <begin position="479"/>
        <end position="481"/>
    </location>
    <ligand>
        <name>ATP</name>
        <dbReference type="ChEBI" id="CHEBI:30616"/>
    </ligand>
</feature>
<feature type="binding site" evidence="1">
    <location>
        <position position="495"/>
    </location>
    <ligand>
        <name>ATP</name>
        <dbReference type="ChEBI" id="CHEBI:30616"/>
    </ligand>
</feature>
<name>CH60_KLEP3</name>
<protein>
    <recommendedName>
        <fullName evidence="1">Chaperonin GroEL</fullName>
        <ecNumber evidence="1">5.6.1.7</ecNumber>
    </recommendedName>
    <alternativeName>
        <fullName evidence="1">60 kDa chaperonin</fullName>
    </alternativeName>
    <alternativeName>
        <fullName evidence="1">Chaperonin-60</fullName>
        <shortName evidence="1">Cpn60</shortName>
    </alternativeName>
</protein>
<reference key="1">
    <citation type="journal article" date="2008" name="PLoS Genet.">
        <title>Complete genome sequence of the N2-fixing broad host range endophyte Klebsiella pneumoniae 342 and virulence predictions verified in mice.</title>
        <authorList>
            <person name="Fouts D.E."/>
            <person name="Tyler H.L."/>
            <person name="DeBoy R.T."/>
            <person name="Daugherty S."/>
            <person name="Ren Q."/>
            <person name="Badger J.H."/>
            <person name="Durkin A.S."/>
            <person name="Huot H."/>
            <person name="Shrivastava S."/>
            <person name="Kothari S."/>
            <person name="Dodson R.J."/>
            <person name="Mohamoud Y."/>
            <person name="Khouri H."/>
            <person name="Roesch L.F.W."/>
            <person name="Krogfelt K.A."/>
            <person name="Struve C."/>
            <person name="Triplett E.W."/>
            <person name="Methe B.A."/>
        </authorList>
    </citation>
    <scope>NUCLEOTIDE SEQUENCE [LARGE SCALE GENOMIC DNA]</scope>
    <source>
        <strain>342</strain>
    </source>
</reference>
<dbReference type="EC" id="5.6.1.7" evidence="1"/>
<dbReference type="EMBL" id="CP000964">
    <property type="protein sequence ID" value="ACI06727.1"/>
    <property type="molecule type" value="Genomic_DNA"/>
</dbReference>
<dbReference type="SMR" id="B5Y368"/>
<dbReference type="KEGG" id="kpe:KPK_5137"/>
<dbReference type="HOGENOM" id="CLU_016503_3_0_6"/>
<dbReference type="Proteomes" id="UP000001734">
    <property type="component" value="Chromosome"/>
</dbReference>
<dbReference type="GO" id="GO:0005737">
    <property type="term" value="C:cytoplasm"/>
    <property type="evidence" value="ECO:0007669"/>
    <property type="project" value="UniProtKB-SubCell"/>
</dbReference>
<dbReference type="GO" id="GO:0005524">
    <property type="term" value="F:ATP binding"/>
    <property type="evidence" value="ECO:0007669"/>
    <property type="project" value="UniProtKB-UniRule"/>
</dbReference>
<dbReference type="GO" id="GO:0140662">
    <property type="term" value="F:ATP-dependent protein folding chaperone"/>
    <property type="evidence" value="ECO:0007669"/>
    <property type="project" value="InterPro"/>
</dbReference>
<dbReference type="GO" id="GO:0016853">
    <property type="term" value="F:isomerase activity"/>
    <property type="evidence" value="ECO:0007669"/>
    <property type="project" value="UniProtKB-KW"/>
</dbReference>
<dbReference type="GO" id="GO:0051082">
    <property type="term" value="F:unfolded protein binding"/>
    <property type="evidence" value="ECO:0007669"/>
    <property type="project" value="UniProtKB-UniRule"/>
</dbReference>
<dbReference type="GO" id="GO:0042026">
    <property type="term" value="P:protein refolding"/>
    <property type="evidence" value="ECO:0007669"/>
    <property type="project" value="UniProtKB-UniRule"/>
</dbReference>
<dbReference type="CDD" id="cd03344">
    <property type="entry name" value="GroEL"/>
    <property type="match status" value="1"/>
</dbReference>
<dbReference type="FunFam" id="1.10.560.10:FF:000001">
    <property type="entry name" value="60 kDa chaperonin"/>
    <property type="match status" value="1"/>
</dbReference>
<dbReference type="FunFam" id="3.50.7.10:FF:000001">
    <property type="entry name" value="60 kDa chaperonin"/>
    <property type="match status" value="1"/>
</dbReference>
<dbReference type="Gene3D" id="3.50.7.10">
    <property type="entry name" value="GroEL"/>
    <property type="match status" value="1"/>
</dbReference>
<dbReference type="Gene3D" id="1.10.560.10">
    <property type="entry name" value="GroEL-like equatorial domain"/>
    <property type="match status" value="1"/>
</dbReference>
<dbReference type="Gene3D" id="3.30.260.10">
    <property type="entry name" value="TCP-1-like chaperonin intermediate domain"/>
    <property type="match status" value="1"/>
</dbReference>
<dbReference type="HAMAP" id="MF_00600">
    <property type="entry name" value="CH60"/>
    <property type="match status" value="1"/>
</dbReference>
<dbReference type="InterPro" id="IPR018370">
    <property type="entry name" value="Chaperonin_Cpn60_CS"/>
</dbReference>
<dbReference type="InterPro" id="IPR001844">
    <property type="entry name" value="Cpn60/GroEL"/>
</dbReference>
<dbReference type="InterPro" id="IPR002423">
    <property type="entry name" value="Cpn60/GroEL/TCP-1"/>
</dbReference>
<dbReference type="InterPro" id="IPR027409">
    <property type="entry name" value="GroEL-like_apical_dom_sf"/>
</dbReference>
<dbReference type="InterPro" id="IPR027413">
    <property type="entry name" value="GROEL-like_equatorial_sf"/>
</dbReference>
<dbReference type="InterPro" id="IPR027410">
    <property type="entry name" value="TCP-1-like_intermed_sf"/>
</dbReference>
<dbReference type="NCBIfam" id="TIGR02348">
    <property type="entry name" value="GroEL"/>
    <property type="match status" value="1"/>
</dbReference>
<dbReference type="NCBIfam" id="NF000592">
    <property type="entry name" value="PRK00013.1"/>
    <property type="match status" value="1"/>
</dbReference>
<dbReference type="NCBIfam" id="NF009487">
    <property type="entry name" value="PRK12849.1"/>
    <property type="match status" value="1"/>
</dbReference>
<dbReference type="NCBIfam" id="NF009488">
    <property type="entry name" value="PRK12850.1"/>
    <property type="match status" value="1"/>
</dbReference>
<dbReference type="NCBIfam" id="NF009489">
    <property type="entry name" value="PRK12851.1"/>
    <property type="match status" value="1"/>
</dbReference>
<dbReference type="PANTHER" id="PTHR45633">
    <property type="entry name" value="60 KDA HEAT SHOCK PROTEIN, MITOCHONDRIAL"/>
    <property type="match status" value="1"/>
</dbReference>
<dbReference type="Pfam" id="PF00118">
    <property type="entry name" value="Cpn60_TCP1"/>
    <property type="match status" value="1"/>
</dbReference>
<dbReference type="PRINTS" id="PR00298">
    <property type="entry name" value="CHAPERONIN60"/>
</dbReference>
<dbReference type="SUPFAM" id="SSF52029">
    <property type="entry name" value="GroEL apical domain-like"/>
    <property type="match status" value="1"/>
</dbReference>
<dbReference type="SUPFAM" id="SSF48592">
    <property type="entry name" value="GroEL equatorial domain-like"/>
    <property type="match status" value="1"/>
</dbReference>
<dbReference type="SUPFAM" id="SSF54849">
    <property type="entry name" value="GroEL-intermediate domain like"/>
    <property type="match status" value="1"/>
</dbReference>
<dbReference type="PROSITE" id="PS00296">
    <property type="entry name" value="CHAPERONINS_CPN60"/>
    <property type="match status" value="1"/>
</dbReference>